<accession>Q1GU76</accession>
<feature type="chain" id="PRO_0000368781" description="ATP synthase subunit b">
    <location>
        <begin position="1"/>
        <end position="176"/>
    </location>
</feature>
<feature type="transmembrane region" description="Helical" evidence="1">
    <location>
        <begin position="18"/>
        <end position="38"/>
    </location>
</feature>
<reference key="1">
    <citation type="journal article" date="2009" name="Proc. Natl. Acad. Sci. U.S.A.">
        <title>The genomic basis of trophic strategy in marine bacteria.</title>
        <authorList>
            <person name="Lauro F.M."/>
            <person name="McDougald D."/>
            <person name="Thomas T."/>
            <person name="Williams T.J."/>
            <person name="Egan S."/>
            <person name="Rice S."/>
            <person name="DeMaere M.Z."/>
            <person name="Ting L."/>
            <person name="Ertan H."/>
            <person name="Johnson J."/>
            <person name="Ferriera S."/>
            <person name="Lapidus A."/>
            <person name="Anderson I."/>
            <person name="Kyrpides N."/>
            <person name="Munk A.C."/>
            <person name="Detter C."/>
            <person name="Han C.S."/>
            <person name="Brown M.V."/>
            <person name="Robb F.T."/>
            <person name="Kjelleberg S."/>
            <person name="Cavicchioli R."/>
        </authorList>
    </citation>
    <scope>NUCLEOTIDE SEQUENCE [LARGE SCALE GENOMIC DNA]</scope>
    <source>
        <strain>DSM 13593 / LMG 18877 / RB2256</strain>
    </source>
</reference>
<name>ATPF_SPHAL</name>
<evidence type="ECO:0000255" key="1">
    <source>
        <dbReference type="HAMAP-Rule" id="MF_01398"/>
    </source>
</evidence>
<keyword id="KW-0066">ATP synthesis</keyword>
<keyword id="KW-0997">Cell inner membrane</keyword>
<keyword id="KW-1003">Cell membrane</keyword>
<keyword id="KW-0138">CF(0)</keyword>
<keyword id="KW-0375">Hydrogen ion transport</keyword>
<keyword id="KW-0406">Ion transport</keyword>
<keyword id="KW-0472">Membrane</keyword>
<keyword id="KW-1185">Reference proteome</keyword>
<keyword id="KW-0812">Transmembrane</keyword>
<keyword id="KW-1133">Transmembrane helix</keyword>
<keyword id="KW-0813">Transport</keyword>
<gene>
    <name evidence="1" type="primary">atpF</name>
    <name type="ordered locus">Sala_1079</name>
</gene>
<sequence>MADFTLILAEGVVEPTAFGLDATVWVSIAMLVFLGILVWKGVPGAIAAMLDKRIAEISKQLGEAEQLRLDAESLKAEYEAKLADAAKEADEMRARADAEAQALVAKAKADATALIARRKQMAEDRIAAAEANALAEVRAAAVKAATEAAAKLIADRHDVAADKALVDQAIASIAKG</sequence>
<organism>
    <name type="scientific">Sphingopyxis alaskensis (strain DSM 13593 / LMG 18877 / RB2256)</name>
    <name type="common">Sphingomonas alaskensis</name>
    <dbReference type="NCBI Taxonomy" id="317655"/>
    <lineage>
        <taxon>Bacteria</taxon>
        <taxon>Pseudomonadati</taxon>
        <taxon>Pseudomonadota</taxon>
        <taxon>Alphaproteobacteria</taxon>
        <taxon>Sphingomonadales</taxon>
        <taxon>Sphingomonadaceae</taxon>
        <taxon>Sphingopyxis</taxon>
    </lineage>
</organism>
<proteinExistence type="inferred from homology"/>
<protein>
    <recommendedName>
        <fullName evidence="1">ATP synthase subunit b</fullName>
    </recommendedName>
    <alternativeName>
        <fullName evidence="1">ATP synthase F(0) sector subunit b</fullName>
    </alternativeName>
    <alternativeName>
        <fullName evidence="1">ATPase subunit I</fullName>
    </alternativeName>
    <alternativeName>
        <fullName evidence="1">F-type ATPase subunit b</fullName>
        <shortName evidence="1">F-ATPase subunit b</shortName>
    </alternativeName>
</protein>
<comment type="function">
    <text evidence="1">F(1)F(0) ATP synthase produces ATP from ADP in the presence of a proton or sodium gradient. F-type ATPases consist of two structural domains, F(1) containing the extramembraneous catalytic core and F(0) containing the membrane proton channel, linked together by a central stalk and a peripheral stalk. During catalysis, ATP synthesis in the catalytic domain of F(1) is coupled via a rotary mechanism of the central stalk subunits to proton translocation.</text>
</comment>
<comment type="function">
    <text evidence="1">Component of the F(0) channel, it forms part of the peripheral stalk, linking F(1) to F(0).</text>
</comment>
<comment type="subunit">
    <text evidence="1">F-type ATPases have 2 components, F(1) - the catalytic core - and F(0) - the membrane proton channel. F(1) has five subunits: alpha(3), beta(3), gamma(1), delta(1), epsilon(1). F(0) has three main subunits: a(1), b(2) and c(10-14). The alpha and beta chains form an alternating ring which encloses part of the gamma chain. F(1) is attached to F(0) by a central stalk formed by the gamma and epsilon chains, while a peripheral stalk is formed by the delta and b chains.</text>
</comment>
<comment type="subcellular location">
    <subcellularLocation>
        <location evidence="1">Cell inner membrane</location>
        <topology evidence="1">Single-pass membrane protein</topology>
    </subcellularLocation>
</comment>
<comment type="similarity">
    <text evidence="1">Belongs to the ATPase B chain family.</text>
</comment>
<dbReference type="EMBL" id="CP000356">
    <property type="protein sequence ID" value="ABF52796.1"/>
    <property type="molecule type" value="Genomic_DNA"/>
</dbReference>
<dbReference type="RefSeq" id="WP_011541381.1">
    <property type="nucleotide sequence ID" value="NC_008048.1"/>
</dbReference>
<dbReference type="SMR" id="Q1GU76"/>
<dbReference type="STRING" id="317655.Sala_1079"/>
<dbReference type="KEGG" id="sal:Sala_1079"/>
<dbReference type="eggNOG" id="COG0711">
    <property type="taxonomic scope" value="Bacteria"/>
</dbReference>
<dbReference type="HOGENOM" id="CLU_079215_6_0_5"/>
<dbReference type="OrthoDB" id="7391503at2"/>
<dbReference type="Proteomes" id="UP000006578">
    <property type="component" value="Chromosome"/>
</dbReference>
<dbReference type="GO" id="GO:0005886">
    <property type="term" value="C:plasma membrane"/>
    <property type="evidence" value="ECO:0007669"/>
    <property type="project" value="UniProtKB-SubCell"/>
</dbReference>
<dbReference type="GO" id="GO:0045259">
    <property type="term" value="C:proton-transporting ATP synthase complex"/>
    <property type="evidence" value="ECO:0007669"/>
    <property type="project" value="UniProtKB-KW"/>
</dbReference>
<dbReference type="GO" id="GO:0046933">
    <property type="term" value="F:proton-transporting ATP synthase activity, rotational mechanism"/>
    <property type="evidence" value="ECO:0007669"/>
    <property type="project" value="UniProtKB-UniRule"/>
</dbReference>
<dbReference type="GO" id="GO:0046961">
    <property type="term" value="F:proton-transporting ATPase activity, rotational mechanism"/>
    <property type="evidence" value="ECO:0007669"/>
    <property type="project" value="TreeGrafter"/>
</dbReference>
<dbReference type="CDD" id="cd06503">
    <property type="entry name" value="ATP-synt_Fo_b"/>
    <property type="match status" value="1"/>
</dbReference>
<dbReference type="HAMAP" id="MF_01398">
    <property type="entry name" value="ATP_synth_b_bprime"/>
    <property type="match status" value="1"/>
</dbReference>
<dbReference type="InterPro" id="IPR002146">
    <property type="entry name" value="ATP_synth_b/b'su_bac/chlpt"/>
</dbReference>
<dbReference type="InterPro" id="IPR050059">
    <property type="entry name" value="ATP_synthase_B_chain"/>
</dbReference>
<dbReference type="PANTHER" id="PTHR33445:SF1">
    <property type="entry name" value="ATP SYNTHASE SUBUNIT B"/>
    <property type="match status" value="1"/>
</dbReference>
<dbReference type="PANTHER" id="PTHR33445">
    <property type="entry name" value="ATP SYNTHASE SUBUNIT B', CHLOROPLASTIC"/>
    <property type="match status" value="1"/>
</dbReference>
<dbReference type="Pfam" id="PF00430">
    <property type="entry name" value="ATP-synt_B"/>
    <property type="match status" value="1"/>
</dbReference>